<name>EX7S_ELUMP</name>
<feature type="chain" id="PRO_1000205223" description="Exodeoxyribonuclease 7 small subunit">
    <location>
        <begin position="1"/>
        <end position="75"/>
    </location>
</feature>
<reference key="1">
    <citation type="journal article" date="2009" name="Appl. Environ. Microbiol.">
        <title>Genomic analysis of 'Elusimicrobium minutum,' the first cultivated representative of the phylum 'Elusimicrobia' (formerly termite group 1).</title>
        <authorList>
            <person name="Herlemann D.P.R."/>
            <person name="Geissinger O."/>
            <person name="Ikeda-Ohtsubo W."/>
            <person name="Kunin V."/>
            <person name="Sun H."/>
            <person name="Lapidus A."/>
            <person name="Hugenholtz P."/>
            <person name="Brune A."/>
        </authorList>
    </citation>
    <scope>NUCLEOTIDE SEQUENCE [LARGE SCALE GENOMIC DNA]</scope>
    <source>
        <strain>Pei191</strain>
    </source>
</reference>
<organism>
    <name type="scientific">Elusimicrobium minutum (strain Pei191)</name>
    <dbReference type="NCBI Taxonomy" id="445932"/>
    <lineage>
        <taxon>Bacteria</taxon>
        <taxon>Pseudomonadati</taxon>
        <taxon>Elusimicrobiota</taxon>
        <taxon>Elusimicrobia</taxon>
        <taxon>Elusimicrobiales</taxon>
        <taxon>Elusimicrobiaceae</taxon>
        <taxon>Elusimicrobium</taxon>
    </lineage>
</organism>
<keyword id="KW-0963">Cytoplasm</keyword>
<keyword id="KW-0269">Exonuclease</keyword>
<keyword id="KW-0378">Hydrolase</keyword>
<keyword id="KW-0540">Nuclease</keyword>
<keyword id="KW-1185">Reference proteome</keyword>
<proteinExistence type="inferred from homology"/>
<dbReference type="EC" id="3.1.11.6" evidence="1"/>
<dbReference type="EMBL" id="CP001055">
    <property type="protein sequence ID" value="ACC97607.1"/>
    <property type="molecule type" value="Genomic_DNA"/>
</dbReference>
<dbReference type="RefSeq" id="WP_012414222.1">
    <property type="nucleotide sequence ID" value="NC_010644.1"/>
</dbReference>
<dbReference type="SMR" id="B2KAR1"/>
<dbReference type="STRING" id="445932.Emin_0039"/>
<dbReference type="KEGG" id="emi:Emin_0039"/>
<dbReference type="HOGENOM" id="CLU_145918_3_4_0"/>
<dbReference type="Proteomes" id="UP000001029">
    <property type="component" value="Chromosome"/>
</dbReference>
<dbReference type="GO" id="GO:0005829">
    <property type="term" value="C:cytosol"/>
    <property type="evidence" value="ECO:0007669"/>
    <property type="project" value="TreeGrafter"/>
</dbReference>
<dbReference type="GO" id="GO:0009318">
    <property type="term" value="C:exodeoxyribonuclease VII complex"/>
    <property type="evidence" value="ECO:0007669"/>
    <property type="project" value="InterPro"/>
</dbReference>
<dbReference type="GO" id="GO:0008855">
    <property type="term" value="F:exodeoxyribonuclease VII activity"/>
    <property type="evidence" value="ECO:0007669"/>
    <property type="project" value="UniProtKB-UniRule"/>
</dbReference>
<dbReference type="GO" id="GO:0006308">
    <property type="term" value="P:DNA catabolic process"/>
    <property type="evidence" value="ECO:0007669"/>
    <property type="project" value="UniProtKB-UniRule"/>
</dbReference>
<dbReference type="Gene3D" id="1.10.287.1040">
    <property type="entry name" value="Exonuclease VII, small subunit"/>
    <property type="match status" value="1"/>
</dbReference>
<dbReference type="HAMAP" id="MF_00337">
    <property type="entry name" value="Exonuc_7_S"/>
    <property type="match status" value="1"/>
</dbReference>
<dbReference type="InterPro" id="IPR003761">
    <property type="entry name" value="Exonuc_VII_S"/>
</dbReference>
<dbReference type="InterPro" id="IPR037004">
    <property type="entry name" value="Exonuc_VII_ssu_sf"/>
</dbReference>
<dbReference type="NCBIfam" id="TIGR01280">
    <property type="entry name" value="xseB"/>
    <property type="match status" value="1"/>
</dbReference>
<dbReference type="PANTHER" id="PTHR34137">
    <property type="entry name" value="EXODEOXYRIBONUCLEASE 7 SMALL SUBUNIT"/>
    <property type="match status" value="1"/>
</dbReference>
<dbReference type="PANTHER" id="PTHR34137:SF1">
    <property type="entry name" value="EXODEOXYRIBONUCLEASE 7 SMALL SUBUNIT"/>
    <property type="match status" value="1"/>
</dbReference>
<dbReference type="Pfam" id="PF02609">
    <property type="entry name" value="Exonuc_VII_S"/>
    <property type="match status" value="1"/>
</dbReference>
<dbReference type="SUPFAM" id="SSF116842">
    <property type="entry name" value="XseB-like"/>
    <property type="match status" value="1"/>
</dbReference>
<protein>
    <recommendedName>
        <fullName evidence="1">Exodeoxyribonuclease 7 small subunit</fullName>
        <ecNumber evidence="1">3.1.11.6</ecNumber>
    </recommendedName>
    <alternativeName>
        <fullName evidence="1">Exodeoxyribonuclease VII small subunit</fullName>
        <shortName evidence="1">Exonuclease VII small subunit</shortName>
    </alternativeName>
</protein>
<sequence>MKEQSFEANLKKLEKIVAQLEDEKTDLDKSAELFEEGSALAAELSAKLKTIKFKVSEIKEKQGDLFTEEINNDDE</sequence>
<gene>
    <name evidence="1" type="primary">xseB</name>
    <name type="ordered locus">Emin_0039</name>
</gene>
<evidence type="ECO:0000255" key="1">
    <source>
        <dbReference type="HAMAP-Rule" id="MF_00337"/>
    </source>
</evidence>
<accession>B2KAR1</accession>
<comment type="function">
    <text evidence="1">Bidirectionally degrades single-stranded DNA into large acid-insoluble oligonucleotides, which are then degraded further into small acid-soluble oligonucleotides.</text>
</comment>
<comment type="catalytic activity">
    <reaction evidence="1">
        <text>Exonucleolytic cleavage in either 5'- to 3'- or 3'- to 5'-direction to yield nucleoside 5'-phosphates.</text>
        <dbReference type="EC" id="3.1.11.6"/>
    </reaction>
</comment>
<comment type="subunit">
    <text evidence="1">Heterooligomer composed of large and small subunits.</text>
</comment>
<comment type="subcellular location">
    <subcellularLocation>
        <location evidence="1">Cytoplasm</location>
    </subcellularLocation>
</comment>
<comment type="similarity">
    <text evidence="1">Belongs to the XseB family.</text>
</comment>